<comment type="function">
    <text evidence="1">Multidrug efflux pump that functions as a H(+)/organic cation antiporter. Mediates the efflux of cationic compounds, such as the model cations, tetraethylammonium (TEA) and 1-methyl-4-phenylpyridinium (MPP+), the platinum-based drug oxaliplatin or weak bases that are positively charged at physiological pH, cimetidine or the antidiabetic drug metformin. Mediates the efflux of the endogenous compounds creatinine, thiamine and estrone-3-sulfate. Plays a physiological role in the excretion of drugs, toxins and endogenous metabolites through the kidney.</text>
</comment>
<comment type="catalytic activity">
    <reaction evidence="1">
        <text>thiamine(out) + H(+)(in) = thiamine(in) + H(+)(out)</text>
        <dbReference type="Rhea" id="RHEA:71271"/>
        <dbReference type="ChEBI" id="CHEBI:15378"/>
        <dbReference type="ChEBI" id="CHEBI:18385"/>
    </reaction>
</comment>
<comment type="catalytic activity">
    <reaction evidence="1">
        <text>estrone 3-sulfate(in) + H(+)(out) = estrone 3-sulfate(out) + H(+)(in)</text>
        <dbReference type="Rhea" id="RHEA:72139"/>
        <dbReference type="ChEBI" id="CHEBI:15378"/>
        <dbReference type="ChEBI" id="CHEBI:60050"/>
    </reaction>
</comment>
<comment type="catalytic activity">
    <reaction evidence="1">
        <text>creatinine(in) + H(+)(out) = creatinine(out) + H(+)(in)</text>
        <dbReference type="Rhea" id="RHEA:72183"/>
        <dbReference type="ChEBI" id="CHEBI:15378"/>
        <dbReference type="ChEBI" id="CHEBI:16737"/>
    </reaction>
</comment>
<comment type="subcellular location">
    <subcellularLocation>
        <location evidence="1">Cell membrane</location>
        <topology evidence="2">Multi-pass membrane protein</topology>
    </subcellularLocation>
    <subcellularLocation>
        <location evidence="1">Apical cell membrane</location>
        <topology evidence="2">Multi-pass membrane protein</topology>
    </subcellularLocation>
    <text evidence="1">Detected in the renal urinary tubules.</text>
</comment>
<comment type="similarity">
    <text evidence="4">Belongs to the multi antimicrobial extrusion (MATE) (TC 2.A.66.1) family.</text>
</comment>
<protein>
    <recommendedName>
        <fullName>Multidrug and toxin extrusion protein 2</fullName>
        <shortName>MATE-2</shortName>
    </recommendedName>
    <alternativeName>
        <fullName>Solute carrier family 47 member 2</fullName>
    </alternativeName>
</protein>
<keyword id="KW-0050">Antiport</keyword>
<keyword id="KW-1003">Cell membrane</keyword>
<keyword id="KW-0472">Membrane</keyword>
<keyword id="KW-1185">Reference proteome</keyword>
<keyword id="KW-0812">Transmembrane</keyword>
<keyword id="KW-1133">Transmembrane helix</keyword>
<keyword id="KW-0813">Transport</keyword>
<accession>Q5R7E4</accession>
<evidence type="ECO:0000250" key="1">
    <source>
        <dbReference type="UniProtKB" id="Q86VL8"/>
    </source>
</evidence>
<evidence type="ECO:0000255" key="2"/>
<evidence type="ECO:0000256" key="3">
    <source>
        <dbReference type="SAM" id="MobiDB-lite"/>
    </source>
</evidence>
<evidence type="ECO:0000305" key="4"/>
<feature type="chain" id="PRO_0000311953" description="Multidrug and toxin extrusion protein 2">
    <location>
        <begin position="1"/>
        <end position="581"/>
    </location>
</feature>
<feature type="topological domain" description="Cytoplasmic" evidence="2">
    <location>
        <begin position="1"/>
        <end position="33"/>
    </location>
</feature>
<feature type="transmembrane region" description="Helical" evidence="2">
    <location>
        <begin position="34"/>
        <end position="54"/>
    </location>
</feature>
<feature type="topological domain" description="Extracellular" evidence="2">
    <location>
        <begin position="55"/>
        <end position="66"/>
    </location>
</feature>
<feature type="transmembrane region" description="Helical" evidence="2">
    <location>
        <begin position="67"/>
        <end position="87"/>
    </location>
</feature>
<feature type="topological domain" description="Cytoplasmic" evidence="2">
    <location>
        <begin position="88"/>
        <end position="119"/>
    </location>
</feature>
<feature type="transmembrane region" description="Helical" evidence="2">
    <location>
        <begin position="120"/>
        <end position="140"/>
    </location>
</feature>
<feature type="topological domain" description="Extracellular" evidence="2">
    <location>
        <begin position="141"/>
        <end position="153"/>
    </location>
</feature>
<feature type="transmembrane region" description="Helical" evidence="2">
    <location>
        <begin position="154"/>
        <end position="174"/>
    </location>
</feature>
<feature type="topological domain" description="Cytoplasmic" evidence="2">
    <location>
        <begin position="175"/>
        <end position="183"/>
    </location>
</feature>
<feature type="transmembrane region" description="Helical" evidence="2">
    <location>
        <begin position="184"/>
        <end position="204"/>
    </location>
</feature>
<feature type="topological domain" description="Extracellular" evidence="2">
    <location>
        <begin position="205"/>
        <end position="212"/>
    </location>
</feature>
<feature type="transmembrane region" description="Helical" evidence="2">
    <location>
        <begin position="213"/>
        <end position="233"/>
    </location>
</feature>
<feature type="topological domain" description="Cytoplasmic" evidence="2">
    <location>
        <begin position="234"/>
        <end position="253"/>
    </location>
</feature>
<feature type="transmembrane region" description="Helical" evidence="2">
    <location>
        <begin position="254"/>
        <end position="273"/>
    </location>
</feature>
<feature type="topological domain" description="Extracellular" evidence="2">
    <location>
        <begin position="274"/>
        <end position="317"/>
    </location>
</feature>
<feature type="transmembrane region" description="Helical" evidence="2">
    <location>
        <begin position="318"/>
        <end position="338"/>
    </location>
</feature>
<feature type="topological domain" description="Cytoplasmic" evidence="2">
    <location>
        <begin position="339"/>
        <end position="346"/>
    </location>
</feature>
<feature type="transmembrane region" description="Helical" evidence="2">
    <location>
        <begin position="347"/>
        <end position="367"/>
    </location>
</feature>
<feature type="topological domain" description="Extracellular" evidence="2">
    <location>
        <begin position="368"/>
        <end position="380"/>
    </location>
</feature>
<feature type="transmembrane region" description="Helical" evidence="2">
    <location>
        <begin position="381"/>
        <end position="401"/>
    </location>
</feature>
<feature type="topological domain" description="Cytoplasmic" evidence="2">
    <location>
        <begin position="402"/>
        <end position="420"/>
    </location>
</feature>
<feature type="transmembrane region" description="Helical" evidence="2">
    <location>
        <begin position="421"/>
        <end position="441"/>
    </location>
</feature>
<feature type="topological domain" description="Extracellular" evidence="2">
    <location>
        <begin position="442"/>
        <end position="444"/>
    </location>
</feature>
<feature type="transmembrane region" description="Helical" evidence="2">
    <location>
        <begin position="445"/>
        <end position="465"/>
    </location>
</feature>
<feature type="topological domain" description="Cytoplasmic" evidence="2">
    <location>
        <begin position="466"/>
        <end position="557"/>
    </location>
</feature>
<feature type="transmembrane region" description="Helical" evidence="2">
    <location>
        <begin position="558"/>
        <end position="578"/>
    </location>
</feature>
<feature type="topological domain" description="Extracellular" evidence="2">
    <location>
        <begin position="579"/>
        <end position="581"/>
    </location>
</feature>
<feature type="region of interest" description="Disordered" evidence="3">
    <location>
        <begin position="481"/>
        <end position="513"/>
    </location>
</feature>
<reference key="1">
    <citation type="submission" date="2004-11" db="EMBL/GenBank/DDBJ databases">
        <authorList>
            <consortium name="The German cDNA consortium"/>
        </authorList>
    </citation>
    <scope>NUCLEOTIDE SEQUENCE [LARGE SCALE MRNA]</scope>
    <source>
        <tissue>Kidney</tissue>
    </source>
</reference>
<proteinExistence type="evidence at transcript level"/>
<gene>
    <name type="primary">SLC47A2</name>
    <name type="synonym">MATE2</name>
</gene>
<name>S47A2_PONAB</name>
<organism>
    <name type="scientific">Pongo abelii</name>
    <name type="common">Sumatran orangutan</name>
    <name type="synonym">Pongo pygmaeus abelii</name>
    <dbReference type="NCBI Taxonomy" id="9601"/>
    <lineage>
        <taxon>Eukaryota</taxon>
        <taxon>Metazoa</taxon>
        <taxon>Chordata</taxon>
        <taxon>Craniata</taxon>
        <taxon>Vertebrata</taxon>
        <taxon>Euteleostomi</taxon>
        <taxon>Mammalia</taxon>
        <taxon>Eutheria</taxon>
        <taxon>Euarchontoglires</taxon>
        <taxon>Primates</taxon>
        <taxon>Haplorrhini</taxon>
        <taxon>Catarrhini</taxon>
        <taxon>Hominidae</taxon>
        <taxon>Pongo</taxon>
    </lineage>
</organism>
<dbReference type="EMBL" id="CR860174">
    <property type="protein sequence ID" value="CAH92316.1"/>
    <property type="molecule type" value="mRNA"/>
</dbReference>
<dbReference type="RefSeq" id="NP_001127538.1">
    <property type="nucleotide sequence ID" value="NM_001134066.2"/>
</dbReference>
<dbReference type="SMR" id="Q5R7E4"/>
<dbReference type="FunCoup" id="Q5R7E4">
    <property type="interactions" value="136"/>
</dbReference>
<dbReference type="STRING" id="9601.ENSPPYP00000009918"/>
<dbReference type="Ensembl" id="ENSPPYT00000010316.2">
    <property type="protein sequence ID" value="ENSPPYP00000009918.2"/>
    <property type="gene ID" value="ENSPPYG00000008839.2"/>
</dbReference>
<dbReference type="GeneID" id="100174615"/>
<dbReference type="KEGG" id="pon:100174615"/>
<dbReference type="CTD" id="146802"/>
<dbReference type="eggNOG" id="KOG1347">
    <property type="taxonomic scope" value="Eukaryota"/>
</dbReference>
<dbReference type="GeneTree" id="ENSGT00940000163062"/>
<dbReference type="InParanoid" id="Q5R7E4"/>
<dbReference type="OrthoDB" id="2126698at2759"/>
<dbReference type="Proteomes" id="UP000001595">
    <property type="component" value="Unplaced"/>
</dbReference>
<dbReference type="GO" id="GO:0016324">
    <property type="term" value="C:apical plasma membrane"/>
    <property type="evidence" value="ECO:0007669"/>
    <property type="project" value="UniProtKB-SubCell"/>
</dbReference>
<dbReference type="GO" id="GO:0005886">
    <property type="term" value="C:plasma membrane"/>
    <property type="evidence" value="ECO:0000250"/>
    <property type="project" value="UniProtKB"/>
</dbReference>
<dbReference type="GO" id="GO:0015297">
    <property type="term" value="F:antiporter activity"/>
    <property type="evidence" value="ECO:0000250"/>
    <property type="project" value="UniProtKB"/>
</dbReference>
<dbReference type="GO" id="GO:0015101">
    <property type="term" value="F:organic cation transmembrane transporter activity"/>
    <property type="evidence" value="ECO:0000250"/>
    <property type="project" value="UniProtKB"/>
</dbReference>
<dbReference type="GO" id="GO:0140968">
    <property type="term" value="F:polyspecific organic cation:proton antiporter activity"/>
    <property type="evidence" value="ECO:0000250"/>
    <property type="project" value="UniProtKB"/>
</dbReference>
<dbReference type="GO" id="GO:0042910">
    <property type="term" value="F:xenobiotic transmembrane transporter activity"/>
    <property type="evidence" value="ECO:0007669"/>
    <property type="project" value="InterPro"/>
</dbReference>
<dbReference type="GO" id="GO:0015695">
    <property type="term" value="P:organic cation transport"/>
    <property type="evidence" value="ECO:0000250"/>
    <property type="project" value="UniProtKB"/>
</dbReference>
<dbReference type="GO" id="GO:1990961">
    <property type="term" value="P:xenobiotic detoxification by transmembrane export across the plasma membrane"/>
    <property type="evidence" value="ECO:0007669"/>
    <property type="project" value="InterPro"/>
</dbReference>
<dbReference type="CDD" id="cd13132">
    <property type="entry name" value="MATE_eukaryotic"/>
    <property type="match status" value="1"/>
</dbReference>
<dbReference type="InterPro" id="IPR045069">
    <property type="entry name" value="MATE_euk"/>
</dbReference>
<dbReference type="InterPro" id="IPR002528">
    <property type="entry name" value="MATE_fam"/>
</dbReference>
<dbReference type="NCBIfam" id="TIGR00797">
    <property type="entry name" value="matE"/>
    <property type="match status" value="1"/>
</dbReference>
<dbReference type="PANTHER" id="PTHR11206">
    <property type="entry name" value="MULTIDRUG RESISTANCE PROTEIN"/>
    <property type="match status" value="1"/>
</dbReference>
<dbReference type="Pfam" id="PF01554">
    <property type="entry name" value="MatE"/>
    <property type="match status" value="2"/>
</dbReference>
<sequence>MDSLQDTVPLDHGGCCPALSRLVPRGFGTEMWTLFALSGPLFLFQVLTFMIYIVSTVFCGHLGKVELASVTLAVAFVNVCGVSVGVGLSSACDTLMSQSFGSPNKKHVGVILQRGALVLLLCCLPCWALFLNTQHILLLFRQDPEVSRLTQDYVMIFIPGLPVIFLYNLLAKYLQNQKITWPQVLSGVVGNCVNGVANYALVSVLNLGVRGSAYANIISQFAQTVFLLLYIVLKKLHLETWAGWSSQCLQDWGPFFSLAVPSMLMICVEWWAYEIGSFLMGLLSVVDLSAQAVIYEVATVTYMRHSHHLAYTAHVARIPLGLSIGVCVRVGMALGAADTVQAKRSAVSGVLSIVGISLVLGTLISILKNQLGHIFTNDEDVIALVSQVLPVYSVFHVFEAICCVYGGVLRGTGKQAFGAAVNAITYYIIGLPLGILLTFVVRMRIMGLWLGMLACVFLATAAFVAYTARLDWKLAAEEAKKHSGQQQQQQRAESTATRSGPEKAVLSSVATGSSPGITLTTYSRSECHVDLFRTPEEAHTLSAPTSRLSVKQLVIRRGAALGAASATLMVGLTVRILATRH</sequence>